<protein>
    <recommendedName>
        <fullName evidence="1">Light-independent protochlorophyllide reductase subunit B</fullName>
        <shortName evidence="1">DPOR subunit B</shortName>
        <shortName evidence="1">LI-POR subunit B</shortName>
        <ecNumber evidence="1">1.3.7.7</ecNumber>
    </recommendedName>
</protein>
<comment type="function">
    <text evidence="1">Component of the dark-operative protochlorophyllide reductase (DPOR) that uses Mg-ATP and reduced ferredoxin to reduce ring D of protochlorophyllide (Pchlide) to form chlorophyllide a (Chlide). This reaction is light-independent. The NB-protein (ChlN-ChlB) is the catalytic component of the complex.</text>
</comment>
<comment type="catalytic activity">
    <reaction evidence="1">
        <text>chlorophyllide a + oxidized 2[4Fe-4S]-[ferredoxin] + 2 ADP + 2 phosphate = protochlorophyllide a + reduced 2[4Fe-4S]-[ferredoxin] + 2 ATP + 2 H2O</text>
        <dbReference type="Rhea" id="RHEA:28202"/>
        <dbReference type="Rhea" id="RHEA-COMP:10002"/>
        <dbReference type="Rhea" id="RHEA-COMP:10004"/>
        <dbReference type="ChEBI" id="CHEBI:15377"/>
        <dbReference type="ChEBI" id="CHEBI:30616"/>
        <dbReference type="ChEBI" id="CHEBI:33722"/>
        <dbReference type="ChEBI" id="CHEBI:33723"/>
        <dbReference type="ChEBI" id="CHEBI:43474"/>
        <dbReference type="ChEBI" id="CHEBI:83348"/>
        <dbReference type="ChEBI" id="CHEBI:83350"/>
        <dbReference type="ChEBI" id="CHEBI:456216"/>
        <dbReference type="EC" id="1.3.7.7"/>
    </reaction>
</comment>
<comment type="cofactor">
    <cofactor evidence="1">
        <name>[4Fe-4S] cluster</name>
        <dbReference type="ChEBI" id="CHEBI:49883"/>
    </cofactor>
    <text evidence="1">Binds 1 [4Fe-4S] cluster per heterodimer. The cluster is bound at the heterodimer interface by residues from both subunits.</text>
</comment>
<comment type="pathway">
    <text evidence="1">Porphyrin-containing compound metabolism; chlorophyll biosynthesis (light-independent).</text>
</comment>
<comment type="subunit">
    <text evidence="1">Protochlorophyllide reductase is composed of three subunits; ChlL, ChlN and ChlB. Forms a heterotetramer of two ChlB and two ChlN subunits.</text>
</comment>
<comment type="subcellular location">
    <subcellularLocation>
        <location>Plastid</location>
        <location>Chloroplast</location>
    </subcellularLocation>
</comment>
<comment type="RNA editing">
    <location>
        <position position="5" evidence="2"/>
    </location>
    <location>
        <position position="6" evidence="2"/>
    </location>
    <location>
        <position position="46" evidence="2"/>
    </location>
    <location>
        <position position="84" evidence="2"/>
    </location>
    <location>
        <position position="189" evidence="2"/>
    </location>
    <location>
        <position position="192" evidence="2"/>
    </location>
    <location>
        <position position="275" evidence="2"/>
    </location>
    <location>
        <position position="311" evidence="2"/>
    </location>
    <location>
        <position position="345" evidence="2"/>
    </location>
    <location>
        <position position="409" evidence="2"/>
    </location>
    <location>
        <position position="439" evidence="2"/>
    </location>
    <location>
        <position position="440" evidence="2"/>
    </location>
    <location>
        <position position="473" evidence="2"/>
    </location>
    <text>The nonsense codon at position 84 is modified to a sense codon.</text>
</comment>
<comment type="similarity">
    <text evidence="1">Belongs to the ChlB/BchB/BchZ family.</text>
</comment>
<accession>Q85FN8</accession>
<proteinExistence type="evidence at transcript level"/>
<reference key="1">
    <citation type="journal article" date="2003" name="DNA Res.">
        <title>Complete nucleotide sequence of the chloroplast genome from a leptosporangiate fern, Adiantum capillus-veneris L.</title>
        <authorList>
            <person name="Wolf P.G."/>
            <person name="Rowe C.A."/>
            <person name="Sinclair R.B."/>
            <person name="Hasebe M."/>
        </authorList>
    </citation>
    <scope>NUCLEOTIDE SEQUENCE [LARGE SCALE GENOMIC DNA]</scope>
</reference>
<reference key="2">
    <citation type="journal article" date="2004" name="Gene">
        <title>High levels of RNA editing in a vascular plant chloroplast genome: analysis of transcripts from the fern Adiantum capillus-veneris.</title>
        <authorList>
            <person name="Wolf P.G."/>
            <person name="Rowe C.A."/>
            <person name="Hasebe M."/>
        </authorList>
    </citation>
    <scope>NUCLEOTIDE SEQUENCE [GENOMIC DNA]</scope>
    <scope>RNA EDITING</scope>
    <source>
        <tissue>Frond</tissue>
    </source>
</reference>
<dbReference type="EC" id="1.3.7.7" evidence="1"/>
<dbReference type="EMBL" id="AY178864">
    <property type="protein sequence ID" value="AAP29373.2"/>
    <property type="molecule type" value="Genomic_DNA"/>
</dbReference>
<dbReference type="RefSeq" id="NP_848041.1">
    <property type="nucleotide sequence ID" value="NC_004766.1"/>
</dbReference>
<dbReference type="SMR" id="Q85FN8"/>
<dbReference type="GeneID" id="807370"/>
<dbReference type="UniPathway" id="UPA00670"/>
<dbReference type="GO" id="GO:0009507">
    <property type="term" value="C:chloroplast"/>
    <property type="evidence" value="ECO:0007669"/>
    <property type="project" value="UniProtKB-SubCell"/>
</dbReference>
<dbReference type="GO" id="GO:0051539">
    <property type="term" value="F:4 iron, 4 sulfur cluster binding"/>
    <property type="evidence" value="ECO:0007669"/>
    <property type="project" value="UniProtKB-UniRule"/>
</dbReference>
<dbReference type="GO" id="GO:0005524">
    <property type="term" value="F:ATP binding"/>
    <property type="evidence" value="ECO:0007669"/>
    <property type="project" value="UniProtKB-UniRule"/>
</dbReference>
<dbReference type="GO" id="GO:0046872">
    <property type="term" value="F:metal ion binding"/>
    <property type="evidence" value="ECO:0007669"/>
    <property type="project" value="UniProtKB-KW"/>
</dbReference>
<dbReference type="GO" id="GO:0016730">
    <property type="term" value="F:oxidoreductase activity, acting on iron-sulfur proteins as donors"/>
    <property type="evidence" value="ECO:0007669"/>
    <property type="project" value="InterPro"/>
</dbReference>
<dbReference type="GO" id="GO:0016636">
    <property type="term" value="F:oxidoreductase activity, acting on the CH-CH group of donors, iron-sulfur protein as acceptor"/>
    <property type="evidence" value="ECO:0007669"/>
    <property type="project" value="UniProtKB-UniRule"/>
</dbReference>
<dbReference type="GO" id="GO:0036068">
    <property type="term" value="P:light-independent chlorophyll biosynthetic process"/>
    <property type="evidence" value="ECO:0007669"/>
    <property type="project" value="UniProtKB-UniRule"/>
</dbReference>
<dbReference type="GO" id="GO:0019685">
    <property type="term" value="P:photosynthesis, dark reaction"/>
    <property type="evidence" value="ECO:0007669"/>
    <property type="project" value="InterPro"/>
</dbReference>
<dbReference type="CDD" id="cd01981">
    <property type="entry name" value="Pchlide_reductase_B"/>
    <property type="match status" value="1"/>
</dbReference>
<dbReference type="Gene3D" id="1.20.89.20">
    <property type="match status" value="1"/>
</dbReference>
<dbReference type="Gene3D" id="3.40.50.1980">
    <property type="entry name" value="Nitrogenase molybdenum iron protein domain"/>
    <property type="match status" value="3"/>
</dbReference>
<dbReference type="Gene3D" id="1.10.8.550">
    <property type="entry name" value="Proto-chlorophyllide reductase 57 kD subunit B"/>
    <property type="match status" value="1"/>
</dbReference>
<dbReference type="HAMAP" id="MF_00353">
    <property type="entry name" value="ChlB_BchB"/>
    <property type="match status" value="1"/>
</dbReference>
<dbReference type="InterPro" id="IPR050152">
    <property type="entry name" value="ChlB/BchB/BchZ"/>
</dbReference>
<dbReference type="InterPro" id="IPR013580">
    <property type="entry name" value="LI-POR_suB-like_C"/>
</dbReference>
<dbReference type="InterPro" id="IPR000510">
    <property type="entry name" value="Nase/OxRdtase_comp1"/>
</dbReference>
<dbReference type="InterPro" id="IPR042298">
    <property type="entry name" value="P-CP_red_C"/>
</dbReference>
<dbReference type="InterPro" id="IPR005969">
    <property type="entry name" value="Protochl_reductB"/>
</dbReference>
<dbReference type="InterPro" id="IPR016209">
    <property type="entry name" value="Protochlorophyllide_Rdtase"/>
</dbReference>
<dbReference type="NCBIfam" id="TIGR01278">
    <property type="entry name" value="DPOR_BchB"/>
    <property type="match status" value="1"/>
</dbReference>
<dbReference type="PANTHER" id="PTHR33712">
    <property type="entry name" value="LIGHT-INDEPENDENT PROTOCHLOROPHYLLIDE REDUCTASE SUBUNIT B"/>
    <property type="match status" value="1"/>
</dbReference>
<dbReference type="PANTHER" id="PTHR33712:SF7">
    <property type="entry name" value="LIGHT-INDEPENDENT PROTOCHLOROPHYLLIDE REDUCTASE SUBUNIT B"/>
    <property type="match status" value="1"/>
</dbReference>
<dbReference type="Pfam" id="PF00148">
    <property type="entry name" value="Oxidored_nitro"/>
    <property type="match status" value="1"/>
</dbReference>
<dbReference type="Pfam" id="PF08369">
    <property type="entry name" value="PCP_red"/>
    <property type="match status" value="1"/>
</dbReference>
<dbReference type="PIRSF" id="PIRSF000163">
    <property type="entry name" value="PCP_ChlB"/>
    <property type="match status" value="1"/>
</dbReference>
<dbReference type="SUPFAM" id="SSF53807">
    <property type="entry name" value="Helical backbone' metal receptor"/>
    <property type="match status" value="1"/>
</dbReference>
<sequence>MKLAYWMYAGPAHIGTLRVASSFRNVHAIMHAPLGDDYFNVMRSMLERERDFTPVTASVVDRHVLARGSRDKVVSNISRKGEEQRPDLIVLTPTCTSSILQEDLQNFVDRASLYSESDVILADVNHYRVNELQASDKTLEQIVRYYLDRARKEGIFNRSLTDVPSANIIGILTLGFHNQHDCRELKRLLGELGVSINQIIPEGEFLNNLKDLPRAWFNIVPYREIGLMAASFLEKEYGMPYISTTPIGISNTADFVMQVEKLMNFWATVLLGKKFHYDQYVENQTKFVSQAAWFSKSIDCQNLAGKEAVVFGDATHAASITKILSGEMGIRVSCSGTYCKHDAGWFNEQVQGLCDEVIITEDHTEVGDTIARIEPSAIFGTQMERHIGKRIDIPCGVISSPVHIQNFPLGYRPFMGYEGTNQISDLIYNSFNLGMEDHLLDVFGGHDTKGISTKSLSTGGKSIDWTPEAESELKRIPGFVRGKVKKNTEVFARQNNILKITVDVMYAAKERRSIESLA</sequence>
<feature type="chain" id="PRO_0000219808" description="Light-independent protochlorophyllide reductase subunit B">
    <location>
        <begin position="1"/>
        <end position="518"/>
    </location>
</feature>
<feature type="active site" description="Proton donor" evidence="1">
    <location>
        <position position="299"/>
    </location>
</feature>
<feature type="binding site" evidence="1">
    <location>
        <position position="36"/>
    </location>
    <ligand>
        <name>[4Fe-4S] cluster</name>
        <dbReference type="ChEBI" id="CHEBI:49883"/>
        <note>ligand shared with heterodimeric partner</note>
    </ligand>
</feature>
<feature type="binding site" evidence="1">
    <location>
        <begin position="434"/>
        <end position="435"/>
    </location>
    <ligand>
        <name>substrate</name>
    </ligand>
</feature>
<name>CHLB_ADICA</name>
<evidence type="ECO:0000255" key="1">
    <source>
        <dbReference type="HAMAP-Rule" id="MF_00353"/>
    </source>
</evidence>
<evidence type="ECO:0000269" key="2">
    <source>
    </source>
</evidence>
<organism>
    <name type="scientific">Adiantum capillus-veneris</name>
    <name type="common">Maidenhair fern</name>
    <dbReference type="NCBI Taxonomy" id="13818"/>
    <lineage>
        <taxon>Eukaryota</taxon>
        <taxon>Viridiplantae</taxon>
        <taxon>Streptophyta</taxon>
        <taxon>Embryophyta</taxon>
        <taxon>Tracheophyta</taxon>
        <taxon>Polypodiopsida</taxon>
        <taxon>Polypodiidae</taxon>
        <taxon>Polypodiales</taxon>
        <taxon>Pteridineae</taxon>
        <taxon>Pteridaceae</taxon>
        <taxon>Vittarioideae</taxon>
        <taxon>Adiantum</taxon>
    </lineage>
</organism>
<gene>
    <name evidence="1" type="primary">chlB</name>
</gene>
<keyword id="KW-0004">4Fe-4S</keyword>
<keyword id="KW-0067">ATP-binding</keyword>
<keyword id="KW-0149">Chlorophyll biosynthesis</keyword>
<keyword id="KW-0150">Chloroplast</keyword>
<keyword id="KW-0408">Iron</keyword>
<keyword id="KW-0411">Iron-sulfur</keyword>
<keyword id="KW-0479">Metal-binding</keyword>
<keyword id="KW-0547">Nucleotide-binding</keyword>
<keyword id="KW-0560">Oxidoreductase</keyword>
<keyword id="KW-0602">Photosynthesis</keyword>
<keyword id="KW-0934">Plastid</keyword>
<keyword id="KW-0691">RNA editing</keyword>
<geneLocation type="chloroplast"/>